<evidence type="ECO:0000250" key="1"/>
<evidence type="ECO:0000250" key="2">
    <source>
        <dbReference type="UniProtKB" id="P62805"/>
    </source>
</evidence>
<evidence type="ECO:0000250" key="3">
    <source>
        <dbReference type="UniProtKB" id="P84040"/>
    </source>
</evidence>
<evidence type="ECO:0000256" key="4">
    <source>
        <dbReference type="SAM" id="MobiDB-lite"/>
    </source>
</evidence>
<evidence type="ECO:0000305" key="5"/>
<proteinExistence type="inferred from homology"/>
<name>H4_DROOR</name>
<dbReference type="EMBL" id="AB105181">
    <property type="protein sequence ID" value="BAD02428.1"/>
    <property type="molecule type" value="Genomic_DNA"/>
</dbReference>
<dbReference type="SMR" id="Q76FF1"/>
<dbReference type="GO" id="GO:0000786">
    <property type="term" value="C:nucleosome"/>
    <property type="evidence" value="ECO:0000250"/>
    <property type="project" value="UniProtKB"/>
</dbReference>
<dbReference type="GO" id="GO:0005634">
    <property type="term" value="C:nucleus"/>
    <property type="evidence" value="ECO:0007669"/>
    <property type="project" value="UniProtKB-SubCell"/>
</dbReference>
<dbReference type="GO" id="GO:0003677">
    <property type="term" value="F:DNA binding"/>
    <property type="evidence" value="ECO:0000250"/>
    <property type="project" value="UniProtKB"/>
</dbReference>
<dbReference type="GO" id="GO:0046982">
    <property type="term" value="F:protein heterodimerization activity"/>
    <property type="evidence" value="ECO:0007669"/>
    <property type="project" value="InterPro"/>
</dbReference>
<dbReference type="GO" id="GO:0030527">
    <property type="term" value="F:structural constituent of chromatin"/>
    <property type="evidence" value="ECO:0007669"/>
    <property type="project" value="InterPro"/>
</dbReference>
<dbReference type="GO" id="GO:0006334">
    <property type="term" value="P:nucleosome assembly"/>
    <property type="evidence" value="ECO:0000250"/>
    <property type="project" value="UniProtKB"/>
</dbReference>
<dbReference type="CDD" id="cd22912">
    <property type="entry name" value="HFD_H4"/>
    <property type="match status" value="1"/>
</dbReference>
<dbReference type="FunFam" id="1.10.20.10:FF:000002">
    <property type="entry name" value="Histone H4"/>
    <property type="match status" value="1"/>
</dbReference>
<dbReference type="Gene3D" id="1.10.20.10">
    <property type="entry name" value="Histone, subunit A"/>
    <property type="match status" value="1"/>
</dbReference>
<dbReference type="InterPro" id="IPR035425">
    <property type="entry name" value="CENP-T/H4_C"/>
</dbReference>
<dbReference type="InterPro" id="IPR009072">
    <property type="entry name" value="Histone-fold"/>
</dbReference>
<dbReference type="InterPro" id="IPR001951">
    <property type="entry name" value="Histone_H4"/>
</dbReference>
<dbReference type="InterPro" id="IPR019809">
    <property type="entry name" value="Histone_H4_CS"/>
</dbReference>
<dbReference type="InterPro" id="IPR004823">
    <property type="entry name" value="TAF_TATA-bd_Histone-like_dom"/>
</dbReference>
<dbReference type="PANTHER" id="PTHR10484">
    <property type="entry name" value="HISTONE H4"/>
    <property type="match status" value="1"/>
</dbReference>
<dbReference type="Pfam" id="PF15511">
    <property type="entry name" value="CENP-T_C"/>
    <property type="match status" value="1"/>
</dbReference>
<dbReference type="PRINTS" id="PR00623">
    <property type="entry name" value="HISTONEH4"/>
</dbReference>
<dbReference type="SMART" id="SM00417">
    <property type="entry name" value="H4"/>
    <property type="match status" value="1"/>
</dbReference>
<dbReference type="SMART" id="SM00803">
    <property type="entry name" value="TAF"/>
    <property type="match status" value="1"/>
</dbReference>
<dbReference type="SUPFAM" id="SSF47113">
    <property type="entry name" value="Histone-fold"/>
    <property type="match status" value="1"/>
</dbReference>
<dbReference type="PROSITE" id="PS00047">
    <property type="entry name" value="HISTONE_H4"/>
    <property type="match status" value="1"/>
</dbReference>
<feature type="initiator methionine" description="Removed" evidence="1">
    <location>
        <position position="1"/>
    </location>
</feature>
<feature type="chain" id="PRO_0000158306" description="Histone H4">
    <location>
        <begin position="2"/>
        <end position="103"/>
    </location>
</feature>
<feature type="DNA-binding region">
    <location>
        <begin position="17"/>
        <end position="21"/>
    </location>
</feature>
<feature type="region of interest" description="Disordered" evidence="4">
    <location>
        <begin position="1"/>
        <end position="20"/>
    </location>
</feature>
<feature type="compositionally biased region" description="Gly residues" evidence="4">
    <location>
        <begin position="1"/>
        <end position="14"/>
    </location>
</feature>
<feature type="modified residue" description="N6-acetyl-N6-methyllysine; alternate" evidence="2">
    <location>
        <position position="6"/>
    </location>
</feature>
<feature type="modified residue" description="N6-acetyllysine" evidence="3">
    <location>
        <position position="6"/>
    </location>
</feature>
<feature type="modified residue" description="N6-acetyl-N6-methyllysine; alternate" evidence="2">
    <location>
        <position position="13"/>
    </location>
</feature>
<feature type="modified residue" description="N6-acetyllysine" evidence="3">
    <location>
        <position position="13"/>
    </location>
</feature>
<feature type="modified residue" description="N6-succinyllysine" evidence="3">
    <location>
        <position position="32"/>
    </location>
</feature>
<feature type="modified residue" description="N6-succinyllysine" evidence="3">
    <location>
        <position position="78"/>
    </location>
</feature>
<feature type="modified residue" description="N6-succinyllysine" evidence="3">
    <location>
        <position position="80"/>
    </location>
</feature>
<feature type="modified residue" description="Phosphothreonine" evidence="3">
    <location>
        <position position="81"/>
    </location>
</feature>
<feature type="modified residue" description="Phosphothreonine" evidence="3">
    <location>
        <position position="83"/>
    </location>
</feature>
<feature type="modified residue" description="N6-succinyllysine" evidence="3">
    <location>
        <position position="92"/>
    </location>
</feature>
<gene>
    <name type="primary">His4</name>
    <name type="synonym">H4</name>
</gene>
<protein>
    <recommendedName>
        <fullName>Histone H4</fullName>
    </recommendedName>
</protein>
<accession>Q76FF1</accession>
<keyword id="KW-0007">Acetylation</keyword>
<keyword id="KW-0158">Chromosome</keyword>
<keyword id="KW-0238">DNA-binding</keyword>
<keyword id="KW-0488">Methylation</keyword>
<keyword id="KW-0544">Nucleosome core</keyword>
<keyword id="KW-0539">Nucleus</keyword>
<keyword id="KW-0597">Phosphoprotein</keyword>
<organism>
    <name type="scientific">Drosophila orena</name>
    <name type="common">Fruit fly</name>
    <dbReference type="NCBI Taxonomy" id="7233"/>
    <lineage>
        <taxon>Eukaryota</taxon>
        <taxon>Metazoa</taxon>
        <taxon>Ecdysozoa</taxon>
        <taxon>Arthropoda</taxon>
        <taxon>Hexapoda</taxon>
        <taxon>Insecta</taxon>
        <taxon>Pterygota</taxon>
        <taxon>Neoptera</taxon>
        <taxon>Endopterygota</taxon>
        <taxon>Diptera</taxon>
        <taxon>Brachycera</taxon>
        <taxon>Muscomorpha</taxon>
        <taxon>Ephydroidea</taxon>
        <taxon>Drosophilidae</taxon>
        <taxon>Drosophila</taxon>
        <taxon>Sophophora</taxon>
    </lineage>
</organism>
<comment type="function">
    <text>Core component of nucleosome. Nucleosomes wrap and compact DNA into chromatin, limiting DNA accessibility to the cellular machineries which require DNA as a template. Histones thereby play a central role in transcription regulation, DNA repair, DNA replication and chromosomal stability. DNA accessibility is regulated via a complex set of post-translational modifications of histones, also called histone code, and nucleosome remodeling.</text>
</comment>
<comment type="subunit">
    <text>The nucleosome is a histone octamer containing two molecules each of H2A, H2B, H3 and H4 assembled in one H3-H4 heterotetramer and two H2A-H2B heterodimers. The octamer wraps approximately 147 bp of DNA.</text>
</comment>
<comment type="subcellular location">
    <subcellularLocation>
        <location evidence="1">Nucleus</location>
    </subcellularLocation>
    <subcellularLocation>
        <location evidence="1">Chromosome</location>
    </subcellularLocation>
</comment>
<comment type="PTM">
    <text evidence="3">Acetylated on Lys-6 (H4K5ac) and Lys-13 (H4K12ac) during prophase I of meiosis. Phosphorylation of H2A 'Thr-119' is a prerequisite for H4 Lys-6 acetylation but not for H4 Lys-13 acetylation. Acetylated on Lys-6 and Lys-13 by the Ada2a-containing (ATAC) histone acetyltransferase complex.</text>
</comment>
<comment type="similarity">
    <text evidence="5">Belongs to the histone H4 family.</text>
</comment>
<sequence>MTGRGKGGKGLGKGGAKRHRKVLRDNIQGITKPAIRRLARRGGVKRISGLIYEETRGVLKVFLENVIRDAVTYTEHAKRKTVTAMDVVYALKRQGRTLYGFGG</sequence>
<reference key="1">
    <citation type="journal article" date="2003" name="Genes Genet. Syst.">
        <title>Divergence and heterogeneity of the histone gene repeating units in the Drosophila melanogaster species subgroup.</title>
        <authorList>
            <person name="Kakita M."/>
            <person name="Shimizu T."/>
            <person name="Emoto M."/>
            <person name="Nagai M."/>
            <person name="Takeguchi M."/>
            <person name="Hosono Y."/>
            <person name="Kume N."/>
            <person name="Ozawa T."/>
            <person name="Ueda M."/>
            <person name="Bhuiyan M.S."/>
            <person name="Matsuo Y."/>
        </authorList>
    </citation>
    <scope>NUCLEOTIDE SEQUENCE [GENOMIC DNA]</scope>
</reference>